<accession>Q99QV3</accession>
<organism>
    <name type="scientific">Staphylococcus aureus (strain Mu50 / ATCC 700699)</name>
    <dbReference type="NCBI Taxonomy" id="158878"/>
    <lineage>
        <taxon>Bacteria</taxon>
        <taxon>Bacillati</taxon>
        <taxon>Bacillota</taxon>
        <taxon>Bacilli</taxon>
        <taxon>Bacillales</taxon>
        <taxon>Staphylococcaceae</taxon>
        <taxon>Staphylococcus</taxon>
    </lineage>
</organism>
<protein>
    <recommendedName>
        <fullName>Lactonase drp35</fullName>
        <ecNumber>3.1.1.-</ecNumber>
    </recommendedName>
</protein>
<gene>
    <name type="primary">drp35</name>
    <name type="ordered locus">SAV2688</name>
</gene>
<keyword id="KW-0002">3D-structure</keyword>
<keyword id="KW-0106">Calcium</keyword>
<keyword id="KW-0963">Cytoplasm</keyword>
<keyword id="KW-0378">Hydrolase</keyword>
<keyword id="KW-0479">Metal-binding</keyword>
<dbReference type="EC" id="3.1.1.-"/>
<dbReference type="EMBL" id="BA000017">
    <property type="protein sequence ID" value="BAB58850.1"/>
    <property type="molecule type" value="Genomic_DNA"/>
</dbReference>
<dbReference type="PDB" id="2DG0">
    <property type="method" value="X-ray"/>
    <property type="resolution" value="2.40 A"/>
    <property type="chains" value="A/B/C/D/E/F/G/H/I/J/K/L=2-324"/>
</dbReference>
<dbReference type="PDB" id="2DG1">
    <property type="method" value="X-ray"/>
    <property type="resolution" value="1.72 A"/>
    <property type="chains" value="A/B/C/D/E/F=2-324"/>
</dbReference>
<dbReference type="PDB" id="2DSO">
    <property type="method" value="X-ray"/>
    <property type="resolution" value="2.10 A"/>
    <property type="chains" value="A/B/C/D/E/F=2-324"/>
</dbReference>
<dbReference type="PDBsum" id="2DG0"/>
<dbReference type="PDBsum" id="2DG1"/>
<dbReference type="PDBsum" id="2DSO"/>
<dbReference type="SMR" id="Q99QV3"/>
<dbReference type="KEGG" id="sav:SAV2688"/>
<dbReference type="HOGENOM" id="CLU_036110_2_0_9"/>
<dbReference type="PhylomeDB" id="Q99QV3"/>
<dbReference type="EvolutionaryTrace" id="Q99QV3"/>
<dbReference type="Proteomes" id="UP000002481">
    <property type="component" value="Chromosome"/>
</dbReference>
<dbReference type="GO" id="GO:0005737">
    <property type="term" value="C:cytoplasm"/>
    <property type="evidence" value="ECO:0007669"/>
    <property type="project" value="UniProtKB-SubCell"/>
</dbReference>
<dbReference type="GO" id="GO:0016787">
    <property type="term" value="F:hydrolase activity"/>
    <property type="evidence" value="ECO:0007669"/>
    <property type="project" value="UniProtKB-KW"/>
</dbReference>
<dbReference type="GO" id="GO:0046872">
    <property type="term" value="F:metal ion binding"/>
    <property type="evidence" value="ECO:0007669"/>
    <property type="project" value="UniProtKB-KW"/>
</dbReference>
<dbReference type="Gene3D" id="2.120.10.30">
    <property type="entry name" value="TolB, C-terminal domain"/>
    <property type="match status" value="1"/>
</dbReference>
<dbReference type="InterPro" id="IPR011042">
    <property type="entry name" value="6-blade_b-propeller_TolB-like"/>
</dbReference>
<dbReference type="InterPro" id="IPR013658">
    <property type="entry name" value="SGL"/>
</dbReference>
<dbReference type="InterPro" id="IPR051262">
    <property type="entry name" value="SMP-30/CGR1_Lactonase"/>
</dbReference>
<dbReference type="PANTHER" id="PTHR47572:SF4">
    <property type="entry name" value="LACTONASE DRP35"/>
    <property type="match status" value="1"/>
</dbReference>
<dbReference type="PANTHER" id="PTHR47572">
    <property type="entry name" value="LIPOPROTEIN-RELATED"/>
    <property type="match status" value="1"/>
</dbReference>
<dbReference type="Pfam" id="PF08450">
    <property type="entry name" value="SGL"/>
    <property type="match status" value="1"/>
</dbReference>
<dbReference type="SUPFAM" id="SSF63829">
    <property type="entry name" value="Calcium-dependent phosphotriesterase"/>
    <property type="match status" value="1"/>
</dbReference>
<proteinExistence type="evidence at protein level"/>
<name>DRP35_STAAM</name>
<comment type="function">
    <text evidence="1">Exhibits lactonase activity. Acts in cells with perturbed membrane integrity and is possibly related to the membrane homeostasis (By similarity).</text>
</comment>
<comment type="cofactor">
    <cofactor evidence="3">
        <name>Ca(2+)</name>
        <dbReference type="ChEBI" id="CHEBI:29108"/>
    </cofactor>
    <text evidence="3">Binds 2 Ca(2+) ions per subunit.</text>
</comment>
<comment type="biophysicochemical properties">
    <phDependence>
        <text evidence="3">Optimum pH is about 6.0.</text>
    </phDependence>
</comment>
<comment type="subcellular location">
    <subcellularLocation>
        <location evidence="1">Cytoplasm</location>
    </subcellularLocation>
</comment>
<comment type="similarity">
    <text evidence="4">Belongs to the SMP-30/CGR1 family.</text>
</comment>
<feature type="chain" id="PRO_0000259749" description="Lactonase drp35">
    <location>
        <begin position="1"/>
        <end position="324"/>
    </location>
</feature>
<feature type="active site" description="Proton donor" evidence="2">
    <location>
        <position position="235"/>
    </location>
</feature>
<feature type="binding site">
    <location>
        <position position="47"/>
    </location>
    <ligand>
        <name>Ca(2+)</name>
        <dbReference type="ChEBI" id="CHEBI:29108"/>
        <label>1</label>
        <note>catalytic</note>
    </ligand>
</feature>
<feature type="binding site">
    <location>
        <position position="109"/>
    </location>
    <ligand>
        <name>Ca(2+)</name>
        <dbReference type="ChEBI" id="CHEBI:29108"/>
        <label>2</label>
    </ligand>
</feature>
<feature type="binding site">
    <location>
        <position position="111"/>
    </location>
    <ligand>
        <name>Ca(2+)</name>
        <dbReference type="ChEBI" id="CHEBI:29108"/>
        <label>2</label>
    </ligand>
</feature>
<feature type="binding site">
    <location>
        <position position="129"/>
    </location>
    <ligand>
        <name>Ca(2+)</name>
        <dbReference type="ChEBI" id="CHEBI:29108"/>
        <label>2</label>
    </ligand>
</feature>
<feature type="binding site">
    <location>
        <position position="132"/>
    </location>
    <ligand>
        <name>Ca(2+)</name>
        <dbReference type="ChEBI" id="CHEBI:29108"/>
        <label>2</label>
    </ligand>
</feature>
<feature type="binding site">
    <location>
        <position position="134"/>
    </location>
    <ligand>
        <name>Ca(2+)</name>
        <dbReference type="ChEBI" id="CHEBI:29108"/>
        <label>2</label>
    </ligand>
</feature>
<feature type="binding site">
    <location>
        <position position="137"/>
    </location>
    <ligand>
        <name>Ca(2+)</name>
        <dbReference type="ChEBI" id="CHEBI:29108"/>
        <label>1</label>
        <note>catalytic</note>
    </ligand>
</feature>
<feature type="binding site">
    <location>
        <position position="184"/>
    </location>
    <ligand>
        <name>Ca(2+)</name>
        <dbReference type="ChEBI" id="CHEBI:29108"/>
        <label>1</label>
        <note>catalytic</note>
    </ligand>
</feature>
<feature type="binding site">
    <location>
        <position position="235"/>
    </location>
    <ligand>
        <name>Ca(2+)</name>
        <dbReference type="ChEBI" id="CHEBI:29108"/>
        <label>1</label>
        <note>catalytic</note>
    </ligand>
</feature>
<feature type="binding site">
    <location>
        <position position="236"/>
    </location>
    <ligand>
        <name>Ca(2+)</name>
        <dbReference type="ChEBI" id="CHEBI:29108"/>
        <label>1</label>
        <note>catalytic</note>
    </ligand>
</feature>
<feature type="mutagenesis site" description="Loss of activity." evidence="3">
    <original>E</original>
    <variation>A</variation>
    <location>
        <position position="47"/>
    </location>
</feature>
<feature type="mutagenesis site" description="Loss of activity due to inability to bind calcium ion." evidence="3">
    <original>E</original>
    <variation>Q</variation>
    <location>
        <position position="47"/>
    </location>
</feature>
<feature type="mutagenesis site" description="Loss of activity." evidence="3">
    <original>E</original>
    <variation>S</variation>
    <location>
        <position position="47"/>
    </location>
</feature>
<feature type="mutagenesis site" description="2.5-fold increase in lactonase activity." evidence="3">
    <original>F</original>
    <variation>A</variation>
    <location>
        <position position="63"/>
    </location>
</feature>
<feature type="mutagenesis site" description="Increase in lactonase activity." evidence="3">
    <original>K</original>
    <variation>A</variation>
    <location>
        <position position="92"/>
    </location>
</feature>
<feature type="mutagenesis site" description="Loss of activity." evidence="3">
    <original>D</original>
    <variation>A</variation>
    <location>
        <position position="137"/>
    </location>
</feature>
<feature type="mutagenesis site" description="Loss of activity but still able to bind calcium ion." evidence="3">
    <original>D</original>
    <variation>N</variation>
    <location>
        <position position="137"/>
    </location>
</feature>
<feature type="mutagenesis site" description="Loss of activity." evidence="3">
    <original>D</original>
    <variation>S</variation>
    <location>
        <position position="137"/>
    </location>
</feature>
<feature type="mutagenesis site" description="Decrease in lactonase activity." evidence="3">
    <original>D</original>
    <variation>A</variation>
    <location>
        <position position="138"/>
    </location>
</feature>
<feature type="mutagenesis site" description="Decrease in lactonase activity." evidence="3">
    <original>D</original>
    <variation>A</variation>
    <location>
        <position position="151"/>
    </location>
</feature>
<feature type="mutagenesis site" description="Loss of activity." evidence="3">
    <original>N</original>
    <variation>A</variation>
    <location>
        <position position="184"/>
    </location>
</feature>
<feature type="mutagenesis site" description="Decrease in lactonase activity." evidence="3">
    <original>N</original>
    <variation>D</variation>
    <location>
        <position position="184"/>
    </location>
</feature>
<feature type="mutagenesis site" description="Loss of activity." evidence="3">
    <original>N</original>
    <variation>S</variation>
    <location>
        <position position="184"/>
    </location>
</feature>
<feature type="mutagenesis site" description="Decrease in lactonase activity." evidence="3">
    <original>G</original>
    <variation>A</variation>
    <location>
        <position position="185"/>
    </location>
</feature>
<feature type="mutagenesis site" description="Loss of activity." evidence="3">
    <original>D</original>
    <variation>A</variation>
    <location>
        <position position="235"/>
    </location>
</feature>
<feature type="mutagenesis site" description="Loss of activity due to inability to bind calcium ion." evidence="3">
    <original>D</original>
    <variation>N</variation>
    <location>
        <position position="235"/>
    </location>
</feature>
<feature type="mutagenesis site" description="Loss of activity." evidence="3">
    <original>D</original>
    <variation>S</variation>
    <location>
        <position position="235"/>
    </location>
</feature>
<feature type="mutagenesis site" description="Decrease in lactonase activity." evidence="3">
    <original>S</original>
    <variation>A</variation>
    <location>
        <position position="236"/>
    </location>
</feature>
<feature type="mutagenesis site" description="Increase in lactonase activity." evidence="3">
    <original>C</original>
    <variation>A</variation>
    <location>
        <position position="237"/>
    </location>
</feature>
<feature type="mutagenesis site" description="Increase in lactonase activity." evidence="3">
    <original>R</original>
    <variation>A</variation>
    <location>
        <position position="280"/>
    </location>
</feature>
<feature type="mutagenesis site" description="Increase in lactonase activity." evidence="3">
    <original>E</original>
    <variation>A</variation>
    <location>
        <position position="301"/>
    </location>
</feature>
<feature type="helix" evidence="5">
    <location>
        <begin position="14"/>
        <end position="17"/>
    </location>
</feature>
<feature type="helix" evidence="5">
    <location>
        <begin position="25"/>
        <end position="27"/>
    </location>
</feature>
<feature type="strand" evidence="5">
    <location>
        <begin position="30"/>
        <end position="32"/>
    </location>
</feature>
<feature type="strand" evidence="5">
    <location>
        <begin position="34"/>
        <end position="42"/>
    </location>
</feature>
<feature type="strand" evidence="5">
    <location>
        <begin position="46"/>
        <end position="51"/>
    </location>
</feature>
<feature type="strand" evidence="5">
    <location>
        <begin position="57"/>
        <end position="61"/>
    </location>
</feature>
<feature type="turn" evidence="5">
    <location>
        <begin position="62"/>
        <end position="64"/>
    </location>
</feature>
<feature type="strand" evidence="5">
    <location>
        <begin position="66"/>
        <end position="70"/>
    </location>
</feature>
<feature type="turn" evidence="5">
    <location>
        <begin position="72"/>
        <end position="74"/>
    </location>
</feature>
<feature type="strand" evidence="5">
    <location>
        <begin position="77"/>
        <end position="82"/>
    </location>
</feature>
<feature type="strand" evidence="5">
    <location>
        <begin position="84"/>
        <end position="93"/>
    </location>
</feature>
<feature type="strand" evidence="5">
    <location>
        <begin position="99"/>
        <end position="103"/>
    </location>
</feature>
<feature type="strand" evidence="5">
    <location>
        <begin position="107"/>
        <end position="109"/>
    </location>
</feature>
<feature type="strand" evidence="5">
    <location>
        <begin position="112"/>
        <end position="116"/>
    </location>
</feature>
<feature type="strand" evidence="5">
    <location>
        <begin position="124"/>
        <end position="127"/>
    </location>
</feature>
<feature type="strand" evidence="5">
    <location>
        <begin position="129"/>
        <end position="132"/>
    </location>
</feature>
<feature type="strand" evidence="5">
    <location>
        <begin position="136"/>
        <end position="141"/>
    </location>
</feature>
<feature type="strand" evidence="5">
    <location>
        <begin position="147"/>
        <end position="151"/>
    </location>
</feature>
<feature type="strand" evidence="5">
    <location>
        <begin position="161"/>
        <end position="166"/>
    </location>
</feature>
<feature type="strand" evidence="5">
    <location>
        <begin position="173"/>
        <end position="188"/>
    </location>
</feature>
<feature type="strand" evidence="5">
    <location>
        <begin position="192"/>
        <end position="199"/>
    </location>
</feature>
<feature type="helix" evidence="5">
    <location>
        <begin position="200"/>
        <end position="202"/>
    </location>
</feature>
<feature type="strand" evidence="5">
    <location>
        <begin position="204"/>
        <end position="210"/>
    </location>
</feature>
<feature type="strand" evidence="5">
    <location>
        <begin position="214"/>
        <end position="227"/>
    </location>
</feature>
<feature type="strand" evidence="5">
    <location>
        <begin position="230"/>
        <end position="240"/>
    </location>
</feature>
<feature type="strand" evidence="5">
    <location>
        <begin position="245"/>
        <end position="250"/>
    </location>
</feature>
<feature type="turn" evidence="5">
    <location>
        <begin position="251"/>
        <end position="253"/>
    </location>
</feature>
<feature type="strand" evidence="5">
    <location>
        <begin position="254"/>
        <end position="258"/>
    </location>
</feature>
<feature type="strand" evidence="5">
    <location>
        <begin position="264"/>
        <end position="269"/>
    </location>
</feature>
<feature type="helix" evidence="5">
    <location>
        <begin position="273"/>
        <end position="275"/>
    </location>
</feature>
<feature type="strand" evidence="5">
    <location>
        <begin position="283"/>
        <end position="286"/>
    </location>
</feature>
<feature type="strand" evidence="5">
    <location>
        <begin position="292"/>
        <end position="298"/>
    </location>
</feature>
<feature type="helix" evidence="5">
    <location>
        <begin position="300"/>
        <end position="302"/>
    </location>
</feature>
<feature type="strand" evidence="5">
    <location>
        <begin position="306"/>
        <end position="312"/>
    </location>
</feature>
<feature type="helix" evidence="5">
    <location>
        <begin position="321"/>
        <end position="323"/>
    </location>
</feature>
<reference key="1">
    <citation type="journal article" date="2001" name="Lancet">
        <title>Whole genome sequencing of meticillin-resistant Staphylococcus aureus.</title>
        <authorList>
            <person name="Kuroda M."/>
            <person name="Ohta T."/>
            <person name="Uchiyama I."/>
            <person name="Baba T."/>
            <person name="Yuzawa H."/>
            <person name="Kobayashi I."/>
            <person name="Cui L."/>
            <person name="Oguchi A."/>
            <person name="Aoki K."/>
            <person name="Nagai Y."/>
            <person name="Lian J.-Q."/>
            <person name="Ito T."/>
            <person name="Kanamori M."/>
            <person name="Matsumaru H."/>
            <person name="Maruyama A."/>
            <person name="Murakami H."/>
            <person name="Hosoyama A."/>
            <person name="Mizutani-Ui Y."/>
            <person name="Takahashi N.K."/>
            <person name="Sawano T."/>
            <person name="Inoue R."/>
            <person name="Kaito C."/>
            <person name="Sekimizu K."/>
            <person name="Hirakawa H."/>
            <person name="Kuhara S."/>
            <person name="Goto S."/>
            <person name="Yabuzaki J."/>
            <person name="Kanehisa M."/>
            <person name="Yamashita A."/>
            <person name="Oshima K."/>
            <person name="Furuya K."/>
            <person name="Yoshino C."/>
            <person name="Shiba T."/>
            <person name="Hattori M."/>
            <person name="Ogasawara N."/>
            <person name="Hayashi H."/>
            <person name="Hiramatsu K."/>
        </authorList>
    </citation>
    <scope>NUCLEOTIDE SEQUENCE [LARGE SCALE GENOMIC DNA]</scope>
    <source>
        <strain>Mu50 / ATCC 700699</strain>
    </source>
</reference>
<reference key="2">
    <citation type="journal article" date="2007" name="J. Biol. Chem.">
        <title>Structural and mutational analyses of drp35 from Staphylococcus aureus: a possible mechanism for its lactonase activity.</title>
        <authorList>
            <person name="Tanaka Y."/>
            <person name="Morikawa K."/>
            <person name="Ohki Y."/>
            <person name="Yao M."/>
            <person name="Tsumoto K."/>
            <person name="Watanabe N."/>
            <person name="Ohta T."/>
            <person name="Tanaka I."/>
        </authorList>
    </citation>
    <scope>X-RAY CRYSTALLOGRAPHY (1.72 ANGSTROMS) OF 2-324 OF APOPROTEIN; COMPLEX WITH CALCIUM IONS AND MUTANT ASN-137</scope>
    <scope>COFACTOR</scope>
    <scope>BIOPHYSICOCHEMICAL PROPERTIES</scope>
    <scope>REACTION MECHANISM</scope>
    <scope>MUTAGENESIS OF GLU-47; PHE-63; LYS-92; ASP-137; ASP-138; ASP-151; ASN-184; GLY-185; ASP-235; SER-236; CYS-237; ARG-280 AND GLU-301</scope>
</reference>
<evidence type="ECO:0000250" key="1"/>
<evidence type="ECO:0000255" key="2"/>
<evidence type="ECO:0000269" key="3">
    <source>
    </source>
</evidence>
<evidence type="ECO:0000305" key="4"/>
<evidence type="ECO:0007829" key="5">
    <source>
        <dbReference type="PDB" id="2DG1"/>
    </source>
</evidence>
<sequence length="324" mass="35964">MMSQQDLPTLFYSGKSNSAVPIISESELQTITAEPWLEISKKGLQLEGLNFDRQGQLFLLDVFEGNIFKINPETKEIKRPFVSHKANPAAIKIHKDGRLFVCYLGDFKSTGGIFAATENGDNLQDIIEDLSTAYCIDDMVFDSKGGFYFTDFRGYSTNPLGGVYYVSPDFRTVTPIIQNISVANGIALSTDEKVLWVTETTANRLHRIALEDDGVTIQPFGATIPYYFTGHEGPDSCCIDSDDNLYVAMYGQGRVLVFNKRGYPIGQILIPGRDEGHMLRSTHPQFIPGTNQLIICSNDIEMGGGSMLYTVNGFAKGHQSFQFQ</sequence>